<sequence>MLTMGTALSQQVDANWQTYIMIAVYFLILIVIGFYGYKQATGNLSEYMLGGRSIGPYITALSAGASDMSGWMIMGLPGSVYSTGLSAMWITIGLTLGAYINYFVVAPRLRVYTELAGDAITLPDFFKNRLNDKNNVLKIISGLIIVVFFTLYTHSGFVSGGKLFESAFGLDYHFGLILVAFIVIFYTFFGGYLAVSITDFFQGVIMLIAMVMVPIVAMMNLNGWGTFHDVAAMKPTNLNLFKGLSFIGIISLFSWGLGYFGQPHIIVRFMSIKSHKMLPKARRLGISWMAVGLLGAVAVGLTGIAFVPAYHIKLEDPETLFIVMSQVLFHPLVGGFLLAAILAAIMSTISSQLLVTSSSLTEDFYKLIRGEEKAKTHQKEFVMIGRLSVLVVAIVAIAIAWNPNDTILNLVGNAWAGFGASFSPLVLFALYWKGLTRAGAVSGMVSGALVVIVWIAWIKPLAHINEIFGLYEIIPGFIVSVIVTYVVSKLTKKPGAFVETDLNKVRDIVREK</sequence>
<feature type="chain" id="PRO_0000364100" description="Sodium/proline symporter">
    <location>
        <begin position="1"/>
        <end position="512"/>
    </location>
</feature>
<feature type="transmembrane region" description="Helical" evidence="3">
    <location>
        <begin position="16"/>
        <end position="36"/>
    </location>
</feature>
<feature type="transmembrane region" description="Helical" evidence="3">
    <location>
        <begin position="54"/>
        <end position="74"/>
    </location>
</feature>
<feature type="transmembrane region" description="Helical" evidence="3">
    <location>
        <begin position="85"/>
        <end position="105"/>
    </location>
</feature>
<feature type="transmembrane region" description="Helical" evidence="3">
    <location>
        <begin position="139"/>
        <end position="159"/>
    </location>
</feature>
<feature type="transmembrane region" description="Helical" evidence="3">
    <location>
        <begin position="174"/>
        <end position="194"/>
    </location>
</feature>
<feature type="transmembrane region" description="Helical" evidence="3">
    <location>
        <begin position="200"/>
        <end position="220"/>
    </location>
</feature>
<feature type="transmembrane region" description="Helical" evidence="3">
    <location>
        <begin position="240"/>
        <end position="260"/>
    </location>
</feature>
<feature type="transmembrane region" description="Helical" evidence="3">
    <location>
        <begin position="286"/>
        <end position="306"/>
    </location>
</feature>
<feature type="transmembrane region" description="Helical" evidence="3">
    <location>
        <begin position="327"/>
        <end position="347"/>
    </location>
</feature>
<feature type="transmembrane region" description="Helical" evidence="3">
    <location>
        <begin position="381"/>
        <end position="401"/>
    </location>
</feature>
<feature type="transmembrane region" description="Helical" evidence="3">
    <location>
        <begin position="410"/>
        <end position="430"/>
    </location>
</feature>
<feature type="transmembrane region" description="Helical" evidence="3">
    <location>
        <begin position="438"/>
        <end position="458"/>
    </location>
</feature>
<feature type="transmembrane region" description="Helical" evidence="3">
    <location>
        <begin position="467"/>
        <end position="487"/>
    </location>
</feature>
<reference key="1">
    <citation type="journal article" date="2002" name="Lancet">
        <title>Genome and virulence determinants of high virulence community-acquired MRSA.</title>
        <authorList>
            <person name="Baba T."/>
            <person name="Takeuchi F."/>
            <person name="Kuroda M."/>
            <person name="Yuzawa H."/>
            <person name="Aoki K."/>
            <person name="Oguchi A."/>
            <person name="Nagai Y."/>
            <person name="Iwama N."/>
            <person name="Asano K."/>
            <person name="Naimi T."/>
            <person name="Kuroda H."/>
            <person name="Cui L."/>
            <person name="Yamamoto K."/>
            <person name="Hiramatsu K."/>
        </authorList>
    </citation>
    <scope>NUCLEOTIDE SEQUENCE [LARGE SCALE GENOMIC DNA]</scope>
    <source>
        <strain>MW2</strain>
    </source>
</reference>
<comment type="function">
    <text evidence="1 2">Catalyzes the sodium-dependent uptake of extracellular L-proline (By similarity). Since most S.aureus strains are L-proline auxotrophs, this transporter may aid the bacterial persistence during an infection of tissues with low proline concentrations (By similarity).</text>
</comment>
<comment type="catalytic activity">
    <reaction evidence="1">
        <text>L-proline(in) + Na(+)(in) = L-proline(out) + Na(+)(out)</text>
        <dbReference type="Rhea" id="RHEA:28967"/>
        <dbReference type="ChEBI" id="CHEBI:29101"/>
        <dbReference type="ChEBI" id="CHEBI:60039"/>
    </reaction>
</comment>
<comment type="subcellular location">
    <subcellularLocation>
        <location evidence="4">Cell membrane</location>
        <topology evidence="3">Multi-pass membrane protein</topology>
    </subcellularLocation>
</comment>
<comment type="similarity">
    <text evidence="4">Belongs to the sodium:solute symporter (SSF) (TC 2.A.21) family.</text>
</comment>
<dbReference type="EMBL" id="BA000033">
    <property type="protein sequence ID" value="BAB95708.1"/>
    <property type="molecule type" value="Genomic_DNA"/>
</dbReference>
<dbReference type="RefSeq" id="WP_000957020.1">
    <property type="nucleotide sequence ID" value="NC_003923.1"/>
</dbReference>
<dbReference type="SMR" id="Q7A0H2"/>
<dbReference type="KEGG" id="sam:MW1843"/>
<dbReference type="HOGENOM" id="CLU_018808_15_2_9"/>
<dbReference type="GO" id="GO:0005886">
    <property type="term" value="C:plasma membrane"/>
    <property type="evidence" value="ECO:0007669"/>
    <property type="project" value="UniProtKB-SubCell"/>
</dbReference>
<dbReference type="GO" id="GO:0015193">
    <property type="term" value="F:L-proline transmembrane transporter activity"/>
    <property type="evidence" value="ECO:0007669"/>
    <property type="project" value="TreeGrafter"/>
</dbReference>
<dbReference type="GO" id="GO:0005298">
    <property type="term" value="F:proline:sodium symporter activity"/>
    <property type="evidence" value="ECO:0007669"/>
    <property type="project" value="InterPro"/>
</dbReference>
<dbReference type="GO" id="GO:0031402">
    <property type="term" value="F:sodium ion binding"/>
    <property type="evidence" value="ECO:0007669"/>
    <property type="project" value="InterPro"/>
</dbReference>
<dbReference type="GO" id="GO:0015824">
    <property type="term" value="P:proline transport"/>
    <property type="evidence" value="ECO:0007669"/>
    <property type="project" value="InterPro"/>
</dbReference>
<dbReference type="CDD" id="cd11475">
    <property type="entry name" value="SLC5sbd_PutP"/>
    <property type="match status" value="1"/>
</dbReference>
<dbReference type="FunFam" id="1.20.1730.10:FF:000002">
    <property type="entry name" value="Sodium/proline symporter"/>
    <property type="match status" value="1"/>
</dbReference>
<dbReference type="Gene3D" id="1.20.1730.10">
    <property type="entry name" value="Sodium/glucose cotransporter"/>
    <property type="match status" value="1"/>
</dbReference>
<dbReference type="InterPro" id="IPR038377">
    <property type="entry name" value="Na/Glc_symporter_sf"/>
</dbReference>
<dbReference type="InterPro" id="IPR011851">
    <property type="entry name" value="Na/Pro_symporter"/>
</dbReference>
<dbReference type="InterPro" id="IPR001734">
    <property type="entry name" value="Na/solute_symporter"/>
</dbReference>
<dbReference type="InterPro" id="IPR050277">
    <property type="entry name" value="Sodium:Solute_Symporter"/>
</dbReference>
<dbReference type="NCBIfam" id="TIGR02121">
    <property type="entry name" value="Na_Pro_sym"/>
    <property type="match status" value="1"/>
</dbReference>
<dbReference type="NCBIfam" id="TIGR00813">
    <property type="entry name" value="sss"/>
    <property type="match status" value="1"/>
</dbReference>
<dbReference type="PANTHER" id="PTHR48086">
    <property type="entry name" value="SODIUM/PROLINE SYMPORTER-RELATED"/>
    <property type="match status" value="1"/>
</dbReference>
<dbReference type="PANTHER" id="PTHR48086:SF3">
    <property type="entry name" value="SODIUM_PROLINE SYMPORTER"/>
    <property type="match status" value="1"/>
</dbReference>
<dbReference type="Pfam" id="PF00474">
    <property type="entry name" value="SSF"/>
    <property type="match status" value="1"/>
</dbReference>
<dbReference type="PROSITE" id="PS50283">
    <property type="entry name" value="NA_SOLUT_SYMP_3"/>
    <property type="match status" value="1"/>
</dbReference>
<keyword id="KW-0029">Amino-acid transport</keyword>
<keyword id="KW-1003">Cell membrane</keyword>
<keyword id="KW-0406">Ion transport</keyword>
<keyword id="KW-0472">Membrane</keyword>
<keyword id="KW-0915">Sodium</keyword>
<keyword id="KW-0739">Sodium transport</keyword>
<keyword id="KW-0769">Symport</keyword>
<keyword id="KW-0812">Transmembrane</keyword>
<keyword id="KW-1133">Transmembrane helix</keyword>
<keyword id="KW-0813">Transport</keyword>
<evidence type="ECO:0000250" key="1">
    <source>
        <dbReference type="UniProtKB" id="P07117"/>
    </source>
</evidence>
<evidence type="ECO:0000250" key="2">
    <source>
        <dbReference type="UniProtKB" id="Q2FWY7"/>
    </source>
</evidence>
<evidence type="ECO:0000255" key="3"/>
<evidence type="ECO:0000305" key="4"/>
<name>PUTP_STAAW</name>
<proteinExistence type="inferred from homology"/>
<accession>Q7A0H2</accession>
<protein>
    <recommendedName>
        <fullName>Sodium/proline symporter</fullName>
    </recommendedName>
    <alternativeName>
        <fullName>Proline permease</fullName>
    </alternativeName>
</protein>
<gene>
    <name type="primary">putP</name>
    <name type="ordered locus">MW1843</name>
</gene>
<organism>
    <name type="scientific">Staphylococcus aureus (strain MW2)</name>
    <dbReference type="NCBI Taxonomy" id="196620"/>
    <lineage>
        <taxon>Bacteria</taxon>
        <taxon>Bacillati</taxon>
        <taxon>Bacillota</taxon>
        <taxon>Bacilli</taxon>
        <taxon>Bacillales</taxon>
        <taxon>Staphylococcaceae</taxon>
        <taxon>Staphylococcus</taxon>
    </lineage>
</organism>